<name>NSRC_ASPN1</name>
<keyword id="KW-0378">Hydrolase</keyword>
<keyword id="KW-0479">Metal-binding</keyword>
<keyword id="KW-1185">Reference proteome</keyword>
<keyword id="KW-0862">Zinc</keyword>
<sequence>MAPGVGGYRQINKALNICAFEEYLESQQTHLSSLPNVEQISPRVIRVLGQNPGKFTLQGTNTYIVGTGTKRLIIDTGQGIPEWADLIRETLSGGDFLLSDVLLTHWHGDHTGGVPDLLRMYPDLTPRIFKNTPDRTQQPIVDGQIFKVEGATVRAVHSPGHSHDHMCFVLEEEQAMFTGDNVLGSGTAAIEHLSTWMVTLKQMQSHGCKLGYPAHGAVITDLQSKIGSELAGKLRRERQALQALRQASRNGSGGPGKGRLTVKELVAAVHGDRIDDGIRVLALEPFMDEVLRKLAEDGAVGFDMRGVLKNAIPDIKARKRFR</sequence>
<proteinExistence type="evidence at protein level"/>
<reference key="1">
    <citation type="journal article" date="2018" name="Proc. Natl. Acad. Sci. U.S.A.">
        <title>Linking secondary metabolites to gene clusters through genome sequencing of six diverse Aspergillus species.</title>
        <authorList>
            <person name="Kjaerboelling I."/>
            <person name="Vesth T.C."/>
            <person name="Frisvad J.C."/>
            <person name="Nybo J.L."/>
            <person name="Theobald S."/>
            <person name="Kuo A."/>
            <person name="Bowyer P."/>
            <person name="Matsuda Y."/>
            <person name="Mondo S."/>
            <person name="Lyhne E.K."/>
            <person name="Kogle M.E."/>
            <person name="Clum A."/>
            <person name="Lipzen A."/>
            <person name="Salamov A."/>
            <person name="Ngan C.Y."/>
            <person name="Daum C."/>
            <person name="Chiniquy J."/>
            <person name="Barry K."/>
            <person name="LaButti K."/>
            <person name="Haridas S."/>
            <person name="Simmons B.A."/>
            <person name="Magnuson J.K."/>
            <person name="Mortensen U.H."/>
            <person name="Larsen T.O."/>
            <person name="Grigoriev I.V."/>
            <person name="Baker S.E."/>
            <person name="Andersen M.R."/>
        </authorList>
    </citation>
    <scope>NUCLEOTIDE SEQUENCE [LARGE SCALE GENOMIC DNA]</scope>
    <source>
        <strain>IBT 16806</strain>
    </source>
</reference>
<reference key="2">
    <citation type="journal article" date="2018" name="Org. Lett.">
        <title>Genetic characterization of neosartorin biosynthesis provides insight into heterodimeric natural product generation.</title>
        <authorList>
            <person name="Matsuda Y."/>
            <person name="Gotfredsen C.H."/>
            <person name="Larsen T.O."/>
        </authorList>
    </citation>
    <scope>FUNCTION</scope>
</reference>
<reference key="3">
    <citation type="journal article" date="2020" name="Org. Lett.">
        <title>Unraveling the fungal strategy for tetrahydroxanthone biosynthesis and diversification.</title>
        <authorList>
            <person name="Wei X."/>
            <person name="Matsuda Y."/>
        </authorList>
    </citation>
    <scope>FUNCTION</scope>
    <scope>CATALYTIC ACTIVITY</scope>
    <scope>PATHWAY</scope>
</reference>
<reference key="4">
    <citation type="journal article" date="2021" name="J. Nat. Prod.">
        <title>Heterologous biosynthesis of tetrahydroxanthone dimers: determination of key factors for selective or divergent synthesis.</title>
        <authorList>
            <person name="Wei X."/>
            <person name="Chen X."/>
            <person name="Chen L."/>
            <person name="Yan D."/>
            <person name="Wang W.G."/>
            <person name="Matsuda Y."/>
        </authorList>
    </citation>
    <scope>FUNCTION</scope>
</reference>
<organism>
    <name type="scientific">Aspergillus novofumigatus (strain IBT 16806)</name>
    <dbReference type="NCBI Taxonomy" id="1392255"/>
    <lineage>
        <taxon>Eukaryota</taxon>
        <taxon>Fungi</taxon>
        <taxon>Dikarya</taxon>
        <taxon>Ascomycota</taxon>
        <taxon>Pezizomycotina</taxon>
        <taxon>Eurotiomycetes</taxon>
        <taxon>Eurotiomycetidae</taxon>
        <taxon>Eurotiales</taxon>
        <taxon>Aspergillaceae</taxon>
        <taxon>Aspergillus</taxon>
        <taxon>Aspergillus subgen. Fumigati</taxon>
    </lineage>
</organism>
<dbReference type="EC" id="3.1.2.-" evidence="5"/>
<dbReference type="EMBL" id="MSZS01000005">
    <property type="protein sequence ID" value="PKX92307.1"/>
    <property type="molecule type" value="Genomic_DNA"/>
</dbReference>
<dbReference type="SMR" id="A0A2I1C3U0"/>
<dbReference type="STRING" id="1392255.A0A2I1C3U0"/>
<dbReference type="VEuPathDB" id="FungiDB:P174DRAFT_460891"/>
<dbReference type="OMA" id="NICAFEE"/>
<dbReference type="OrthoDB" id="17458at2759"/>
<dbReference type="Proteomes" id="UP000234474">
    <property type="component" value="Unassembled WGS sequence"/>
</dbReference>
<dbReference type="GO" id="GO:0016787">
    <property type="term" value="F:hydrolase activity"/>
    <property type="evidence" value="ECO:0007669"/>
    <property type="project" value="UniProtKB-KW"/>
</dbReference>
<dbReference type="GO" id="GO:0046872">
    <property type="term" value="F:metal ion binding"/>
    <property type="evidence" value="ECO:0007669"/>
    <property type="project" value="UniProtKB-KW"/>
</dbReference>
<dbReference type="GO" id="GO:0044550">
    <property type="term" value="P:secondary metabolite biosynthetic process"/>
    <property type="evidence" value="ECO:0007669"/>
    <property type="project" value="UniProtKB-ARBA"/>
</dbReference>
<dbReference type="CDD" id="cd07722">
    <property type="entry name" value="LACTB2-like_MBL-fold"/>
    <property type="match status" value="1"/>
</dbReference>
<dbReference type="FunFam" id="3.60.15.10:FF:000041">
    <property type="entry name" value="Metallo-beta-lactamase domain protein"/>
    <property type="match status" value="1"/>
</dbReference>
<dbReference type="Gene3D" id="3.60.15.10">
    <property type="entry name" value="Ribonuclease Z/Hydroxyacylglutathione hydrolase-like"/>
    <property type="match status" value="1"/>
</dbReference>
<dbReference type="Gene3D" id="1.10.10.10">
    <property type="entry name" value="Winged helix-like DNA-binding domain superfamily/Winged helix DNA-binding domain"/>
    <property type="match status" value="1"/>
</dbReference>
<dbReference type="InterPro" id="IPR047921">
    <property type="entry name" value="LACTB2-like_MBL-fold"/>
</dbReference>
<dbReference type="InterPro" id="IPR001279">
    <property type="entry name" value="Metallo-B-lactamas"/>
</dbReference>
<dbReference type="InterPro" id="IPR036866">
    <property type="entry name" value="RibonucZ/Hydroxyglut_hydro"/>
</dbReference>
<dbReference type="InterPro" id="IPR050662">
    <property type="entry name" value="Sec-metab_biosynth-thioest"/>
</dbReference>
<dbReference type="InterPro" id="IPR036388">
    <property type="entry name" value="WH-like_DNA-bd_sf"/>
</dbReference>
<dbReference type="PANTHER" id="PTHR23131:SF3">
    <property type="entry name" value="ATROCHRYSONE CARBOXYL ACP THIOESTERASE"/>
    <property type="match status" value="1"/>
</dbReference>
<dbReference type="PANTHER" id="PTHR23131">
    <property type="entry name" value="ENDORIBONUCLEASE LACTB2"/>
    <property type="match status" value="1"/>
</dbReference>
<dbReference type="Pfam" id="PF00753">
    <property type="entry name" value="Lactamase_B"/>
    <property type="match status" value="1"/>
</dbReference>
<dbReference type="SMART" id="SM00849">
    <property type="entry name" value="Lactamase_B"/>
    <property type="match status" value="1"/>
</dbReference>
<dbReference type="SUPFAM" id="SSF56281">
    <property type="entry name" value="Metallo-hydrolase/oxidoreductase"/>
    <property type="match status" value="1"/>
</dbReference>
<gene>
    <name evidence="7" type="primary">nsrC</name>
    <name type="ORF">P174DRAFT_460891</name>
</gene>
<feature type="chain" id="PRO_0000453432" description="Atrochrysone carboxyl ACP thioesterase nsrC">
    <location>
        <begin position="1"/>
        <end position="322"/>
    </location>
</feature>
<feature type="active site" description="Proton donor/acceptor" evidence="3">
    <location>
        <position position="109"/>
    </location>
</feature>
<feature type="binding site" evidence="2">
    <location>
        <position position="105"/>
    </location>
    <ligand>
        <name>Zn(2+)</name>
        <dbReference type="ChEBI" id="CHEBI:29105"/>
        <label>1</label>
        <note>catalytic</note>
    </ligand>
</feature>
<feature type="binding site" evidence="2">
    <location>
        <position position="107"/>
    </location>
    <ligand>
        <name>Zn(2+)</name>
        <dbReference type="ChEBI" id="CHEBI:29105"/>
        <label>1</label>
        <note>catalytic</note>
    </ligand>
</feature>
<feature type="binding site" evidence="2">
    <location>
        <position position="109"/>
    </location>
    <ligand>
        <name>Zn(2+)</name>
        <dbReference type="ChEBI" id="CHEBI:29105"/>
        <label>2</label>
        <note>catalytic</note>
    </ligand>
</feature>
<feature type="binding site" evidence="2">
    <location>
        <position position="110"/>
    </location>
    <ligand>
        <name>Zn(2+)</name>
        <dbReference type="ChEBI" id="CHEBI:29105"/>
        <label>2</label>
        <note>catalytic</note>
    </ligand>
</feature>
<protein>
    <recommendedName>
        <fullName evidence="7">Atrochrysone carboxyl ACP thioesterase nsrC</fullName>
        <shortName evidence="7">ACTE nsr</shortName>
        <ecNumber evidence="5">3.1.2.-</ecNumber>
    </recommendedName>
    <alternativeName>
        <fullName evidence="7">Neosartorin biosynthesis cluster protein C</fullName>
    </alternativeName>
</protein>
<accession>A0A2I1C3U0</accession>
<comment type="function">
    <text evidence="4 5 6">Atrochrysone carboxyl ACP thioesterase; part of the gene cluster that mediates the biosynthesis of the tetrahydroxanthone dimer neosartorin, which exhibits antibacterial activity (PubMed:30394754, PubMed:32105084, PubMed:33891392). The two different monomeric units appear to be synthesized by the same set of enzymes, among which the Baeyer-Villiger monooxygenase nsrF is the key enzyme for the divergence of the biosynthetic routes (PubMed:32105084). The pathway begins with the synthesis of atrochrysone thioester by the polyketide synthase nsrB (PubMed:32105084). The atrochrysone carboxyl ACP thioesterase nsrC then breaks the thioester bond and releases the atrochrysone carboxylic acid from AacuL (PubMed:32105084). Atrochrysone carboxylic acid is decarboxylated by the decarboxylase nsrE, and oxidized by the anthrone oxygenase nsrD to yield emodin (PubMed:32105084). Emodin is then reduced to emodin hydroquinone by the oxidoreductase nsrR (PubMed:32105084). A-ring reduction by the short chain dehydrogenase nsrJ, dehydration by the scytalone dehydratase-like protein nsrI and probable spontaneous re-oxidation, results in overall deoxygenation to chrysophanol (PubMed:32105084). The Baeyer-Villiger monooxygenase nsrF accepts chrysophanol as a substrate to insert one oxygen atom at two different positions to yield the precursors of both monomric units (PubMed:30394754, PubMed:32105084, PubMed:33891392). NsrF is promiscuous/flexible in interacting with the 2 (non methylated and methylated) aromatic rings of chrysophanol, thus diverging the biosynthetic pathway at this point (PubMed:30394754, PubMed:32105084, PubMed:33891392). After the hydrolysis of the lactones, methylesterification by the methyltransferase nsrG yields respectively moniliphenone and 2,2',6'-trihydroxy-4-methyl-6-methoxya-cyldiphenylmethanone (PubMed:30394754, PubMed:32105084). The next steps are the hydroxylation by the FAD-dependent monooxygenase nsrK, followed by isomerization by the monooxygenase nsrQ (PubMed:32105084). The short chain dehydrogenase/reductase nsrO then catalyzes the C-5 ketoreduction to give the xanthone skeleton of blennolide C and 5-acetylblennolide A (PubMed:32105084). The acetyltransferase nsrL has a strict substrate specificity and uses only blennolide A but not blennolide C to yield 5-acetylblennolide A as the single-acetylated product (PubMed:30394754). In the final step of the biosynthesis, the heterodimerization of the 2 xanthones, blennolide C and 5-acetylblennolide A, is catalyzed by the cytochrome P450 monooxygenase nsrP (PubMed:30394754). NsrP can utilize at least three different xanthones as its substrates to perform the dimerization reaction (PubMed:30394754).</text>
</comment>
<comment type="catalytic activity">
    <reaction evidence="5">
        <text>atrochrysone carboxyl-[ACP] + H2O = atrochrysone carboxylate + holo-[ACP] + H(+)</text>
        <dbReference type="Rhea" id="RHEA:64236"/>
        <dbReference type="Rhea" id="RHEA-COMP:9685"/>
        <dbReference type="Rhea" id="RHEA-COMP:16552"/>
        <dbReference type="ChEBI" id="CHEBI:15377"/>
        <dbReference type="ChEBI" id="CHEBI:15378"/>
        <dbReference type="ChEBI" id="CHEBI:64479"/>
        <dbReference type="ChEBI" id="CHEBI:149712"/>
        <dbReference type="ChEBI" id="CHEBI:149713"/>
    </reaction>
    <physiologicalReaction direction="left-to-right" evidence="1">
        <dbReference type="Rhea" id="RHEA:64237"/>
    </physiologicalReaction>
</comment>
<comment type="cofactor">
    <cofactor evidence="2">
        <name>Zn(2+)</name>
        <dbReference type="ChEBI" id="CHEBI:29105"/>
    </cofactor>
    <text evidence="2">Binds 2 Zn(2+) ions per subunit.</text>
</comment>
<comment type="pathway">
    <text evidence="5">Secondary metabolite biosynthesis.</text>
</comment>
<comment type="similarity">
    <text evidence="8">Belongs to the metallo-beta-lactamase superfamily.</text>
</comment>
<evidence type="ECO:0000250" key="1">
    <source>
        <dbReference type="UniProtKB" id="Q5BH31"/>
    </source>
</evidence>
<evidence type="ECO:0000250" key="2">
    <source>
        <dbReference type="UniProtKB" id="Q988B9"/>
    </source>
</evidence>
<evidence type="ECO:0000255" key="3"/>
<evidence type="ECO:0000269" key="4">
    <source>
    </source>
</evidence>
<evidence type="ECO:0000269" key="5">
    <source>
    </source>
</evidence>
<evidence type="ECO:0000269" key="6">
    <source>
    </source>
</evidence>
<evidence type="ECO:0000303" key="7">
    <source>
    </source>
</evidence>
<evidence type="ECO:0000305" key="8"/>